<sequence>MADNKANKEQVHRVFQNISKKYDRLNNIISFEQHKVWRKRVMKDMGVRKGTKALDVCCGTGDWTIALSKAVGPTGEVTGIDFSENMLEVGKEKTASMENVKLVHGDAMELPFEDNSFDYVTIGFGLRNVPDYLVALKEMNRVLKPGGMVVCLETSQPTLPVFKQMYALYFKFVMPIFGKLFAKSKEEYEWLQQSTFNFPGKEELKRMFEEAGFINVRVRSFTGGVAAMHLGYKEKDNTKGD</sequence>
<gene>
    <name evidence="1" type="primary">menG</name>
    <name type="ordered locus">SAHV_1459</name>
</gene>
<organism>
    <name type="scientific">Staphylococcus aureus (strain Mu3 / ATCC 700698)</name>
    <dbReference type="NCBI Taxonomy" id="418127"/>
    <lineage>
        <taxon>Bacteria</taxon>
        <taxon>Bacillati</taxon>
        <taxon>Bacillota</taxon>
        <taxon>Bacilli</taxon>
        <taxon>Bacillales</taxon>
        <taxon>Staphylococcaceae</taxon>
        <taxon>Staphylococcus</taxon>
    </lineage>
</organism>
<dbReference type="EC" id="2.1.1.163" evidence="1"/>
<dbReference type="EMBL" id="AP009324">
    <property type="protein sequence ID" value="BAF78342.1"/>
    <property type="molecule type" value="Genomic_DNA"/>
</dbReference>
<dbReference type="RefSeq" id="WP_000774684.1">
    <property type="nucleotide sequence ID" value="NZ_CTYB01000006.1"/>
</dbReference>
<dbReference type="SMR" id="A7X2H6"/>
<dbReference type="KEGG" id="saw:SAHV_1459"/>
<dbReference type="HOGENOM" id="CLU_037990_0_0_9"/>
<dbReference type="UniPathway" id="UPA00079">
    <property type="reaction ID" value="UER00169"/>
</dbReference>
<dbReference type="GO" id="GO:0043770">
    <property type="term" value="F:demethylmenaquinone methyltransferase activity"/>
    <property type="evidence" value="ECO:0007669"/>
    <property type="project" value="UniProtKB-UniRule"/>
</dbReference>
<dbReference type="GO" id="GO:0009234">
    <property type="term" value="P:menaquinone biosynthetic process"/>
    <property type="evidence" value="ECO:0007669"/>
    <property type="project" value="UniProtKB-UniRule"/>
</dbReference>
<dbReference type="GO" id="GO:0032259">
    <property type="term" value="P:methylation"/>
    <property type="evidence" value="ECO:0007669"/>
    <property type="project" value="UniProtKB-KW"/>
</dbReference>
<dbReference type="CDD" id="cd02440">
    <property type="entry name" value="AdoMet_MTases"/>
    <property type="match status" value="1"/>
</dbReference>
<dbReference type="FunFam" id="3.40.50.150:FF:000086">
    <property type="entry name" value="Demethylmenaquinone methyltransferase"/>
    <property type="match status" value="1"/>
</dbReference>
<dbReference type="Gene3D" id="3.40.50.150">
    <property type="entry name" value="Vaccinia Virus protein VP39"/>
    <property type="match status" value="1"/>
</dbReference>
<dbReference type="HAMAP" id="MF_01813">
    <property type="entry name" value="MenG_UbiE_methyltr"/>
    <property type="match status" value="1"/>
</dbReference>
<dbReference type="InterPro" id="IPR029063">
    <property type="entry name" value="SAM-dependent_MTases_sf"/>
</dbReference>
<dbReference type="InterPro" id="IPR004033">
    <property type="entry name" value="UbiE/COQ5_MeTrFase"/>
</dbReference>
<dbReference type="InterPro" id="IPR023576">
    <property type="entry name" value="UbiE/COQ5_MeTrFase_CS"/>
</dbReference>
<dbReference type="NCBIfam" id="TIGR01934">
    <property type="entry name" value="MenG_MenH_UbiE"/>
    <property type="match status" value="1"/>
</dbReference>
<dbReference type="NCBIfam" id="NF001243">
    <property type="entry name" value="PRK00216.1-4"/>
    <property type="match status" value="1"/>
</dbReference>
<dbReference type="NCBIfam" id="NF001244">
    <property type="entry name" value="PRK00216.1-5"/>
    <property type="match status" value="1"/>
</dbReference>
<dbReference type="PANTHER" id="PTHR43591:SF24">
    <property type="entry name" value="2-METHOXY-6-POLYPRENYL-1,4-BENZOQUINOL METHYLASE, MITOCHONDRIAL"/>
    <property type="match status" value="1"/>
</dbReference>
<dbReference type="PANTHER" id="PTHR43591">
    <property type="entry name" value="METHYLTRANSFERASE"/>
    <property type="match status" value="1"/>
</dbReference>
<dbReference type="Pfam" id="PF01209">
    <property type="entry name" value="Ubie_methyltran"/>
    <property type="match status" value="1"/>
</dbReference>
<dbReference type="SUPFAM" id="SSF53335">
    <property type="entry name" value="S-adenosyl-L-methionine-dependent methyltransferases"/>
    <property type="match status" value="1"/>
</dbReference>
<dbReference type="PROSITE" id="PS51608">
    <property type="entry name" value="SAM_MT_UBIE"/>
    <property type="match status" value="1"/>
</dbReference>
<dbReference type="PROSITE" id="PS01183">
    <property type="entry name" value="UBIE_1"/>
    <property type="match status" value="1"/>
</dbReference>
<dbReference type="PROSITE" id="PS01184">
    <property type="entry name" value="UBIE_2"/>
    <property type="match status" value="1"/>
</dbReference>
<comment type="function">
    <text evidence="1">Methyltransferase required for the conversion of demethylmenaquinol (DMKH2) to menaquinol (MKH2).</text>
</comment>
<comment type="catalytic activity">
    <reaction evidence="1">
        <text>a 2-demethylmenaquinol + S-adenosyl-L-methionine = a menaquinol + S-adenosyl-L-homocysteine + H(+)</text>
        <dbReference type="Rhea" id="RHEA:42640"/>
        <dbReference type="Rhea" id="RHEA-COMP:9539"/>
        <dbReference type="Rhea" id="RHEA-COMP:9563"/>
        <dbReference type="ChEBI" id="CHEBI:15378"/>
        <dbReference type="ChEBI" id="CHEBI:18151"/>
        <dbReference type="ChEBI" id="CHEBI:55437"/>
        <dbReference type="ChEBI" id="CHEBI:57856"/>
        <dbReference type="ChEBI" id="CHEBI:59789"/>
        <dbReference type="EC" id="2.1.1.163"/>
    </reaction>
</comment>
<comment type="pathway">
    <text evidence="1">Quinol/quinone metabolism; menaquinone biosynthesis; menaquinol from 1,4-dihydroxy-2-naphthoate: step 2/2.</text>
</comment>
<comment type="similarity">
    <text evidence="1">Belongs to the class I-like SAM-binding methyltransferase superfamily. MenG/UbiE family.</text>
</comment>
<feature type="chain" id="PRO_1000056308" description="Demethylmenaquinone methyltransferase">
    <location>
        <begin position="1"/>
        <end position="241"/>
    </location>
</feature>
<feature type="binding site" evidence="1">
    <location>
        <position position="60"/>
    </location>
    <ligand>
        <name>S-adenosyl-L-methionine</name>
        <dbReference type="ChEBI" id="CHEBI:59789"/>
    </ligand>
</feature>
<feature type="binding site" evidence="1">
    <location>
        <position position="81"/>
    </location>
    <ligand>
        <name>S-adenosyl-L-methionine</name>
        <dbReference type="ChEBI" id="CHEBI:59789"/>
    </ligand>
</feature>
<feature type="binding site" evidence="1">
    <location>
        <begin position="106"/>
        <end position="107"/>
    </location>
    <ligand>
        <name>S-adenosyl-L-methionine</name>
        <dbReference type="ChEBI" id="CHEBI:59789"/>
    </ligand>
</feature>
<reference key="1">
    <citation type="journal article" date="2008" name="Antimicrob. Agents Chemother.">
        <title>Mutated response regulator graR is responsible for phenotypic conversion of Staphylococcus aureus from heterogeneous vancomycin-intermediate resistance to vancomycin-intermediate resistance.</title>
        <authorList>
            <person name="Neoh H.-M."/>
            <person name="Cui L."/>
            <person name="Yuzawa H."/>
            <person name="Takeuchi F."/>
            <person name="Matsuo M."/>
            <person name="Hiramatsu K."/>
        </authorList>
    </citation>
    <scope>NUCLEOTIDE SEQUENCE [LARGE SCALE GENOMIC DNA]</scope>
    <source>
        <strain>Mu3 / ATCC 700698</strain>
    </source>
</reference>
<proteinExistence type="inferred from homology"/>
<keyword id="KW-0474">Menaquinone biosynthesis</keyword>
<keyword id="KW-0489">Methyltransferase</keyword>
<keyword id="KW-0949">S-adenosyl-L-methionine</keyword>
<keyword id="KW-0808">Transferase</keyword>
<protein>
    <recommendedName>
        <fullName evidence="1">Demethylmenaquinone methyltransferase</fullName>
        <ecNumber evidence="1">2.1.1.163</ecNumber>
    </recommendedName>
</protein>
<name>MENG_STAA1</name>
<accession>A7X2H6</accession>
<evidence type="ECO:0000255" key="1">
    <source>
        <dbReference type="HAMAP-Rule" id="MF_01813"/>
    </source>
</evidence>